<evidence type="ECO:0000255" key="1"/>
<evidence type="ECO:0000256" key="2">
    <source>
        <dbReference type="SAM" id="MobiDB-lite"/>
    </source>
</evidence>
<evidence type="ECO:0000269" key="3">
    <source>
    </source>
</evidence>
<evidence type="ECO:0000305" key="4"/>
<evidence type="ECO:0007744" key="5">
    <source>
    </source>
</evidence>
<evidence type="ECO:0007744" key="6">
    <source>
    </source>
</evidence>
<proteinExistence type="evidence at protein level"/>
<reference key="1">
    <citation type="journal article" date="1991" name="EMBO J.">
        <title>A yeast homologue of the bovine lens fibre MIP gene family complements the growth defect of a Saccharomyces cerevisiae mutant on fermentable sugars but not its defect in glucose-induced RAS-mediated cAMP signalling.</title>
        <authorList>
            <person name="van Aelst L."/>
            <person name="Hohmann S."/>
            <person name="Zimmermann F.K."/>
            <person name="Jans A.W.H."/>
            <person name="Thevelein J.M."/>
        </authorList>
    </citation>
    <scope>NUCLEOTIDE SEQUENCE [GENOMIC DNA]</scope>
</reference>
<reference key="2">
    <citation type="journal article" date="1997" name="Nature">
        <title>The nucleotide sequence of Saccharomyces cerevisiae chromosome XII.</title>
        <authorList>
            <person name="Johnston M."/>
            <person name="Hillier L.W."/>
            <person name="Riles L."/>
            <person name="Albermann K."/>
            <person name="Andre B."/>
            <person name="Ansorge W."/>
            <person name="Benes V."/>
            <person name="Brueckner M."/>
            <person name="Delius H."/>
            <person name="Dubois E."/>
            <person name="Duesterhoeft A."/>
            <person name="Entian K.-D."/>
            <person name="Floeth M."/>
            <person name="Goffeau A."/>
            <person name="Hebling U."/>
            <person name="Heumann K."/>
            <person name="Heuss-Neitzel D."/>
            <person name="Hilbert H."/>
            <person name="Hilger F."/>
            <person name="Kleine K."/>
            <person name="Koetter P."/>
            <person name="Louis E.J."/>
            <person name="Messenguy F."/>
            <person name="Mewes H.-W."/>
            <person name="Miosga T."/>
            <person name="Moestl D."/>
            <person name="Mueller-Auer S."/>
            <person name="Nentwich U."/>
            <person name="Obermaier B."/>
            <person name="Piravandi E."/>
            <person name="Pohl T.M."/>
            <person name="Portetelle D."/>
            <person name="Purnelle B."/>
            <person name="Rechmann S."/>
            <person name="Rieger M."/>
            <person name="Rinke M."/>
            <person name="Rose M."/>
            <person name="Scharfe M."/>
            <person name="Scherens B."/>
            <person name="Scholler P."/>
            <person name="Schwager C."/>
            <person name="Schwarz S."/>
            <person name="Underwood A.P."/>
            <person name="Urrestarazu L.A."/>
            <person name="Vandenbol M."/>
            <person name="Verhasselt P."/>
            <person name="Vierendeels F."/>
            <person name="Voet M."/>
            <person name="Volckaert G."/>
            <person name="Voss H."/>
            <person name="Wambutt R."/>
            <person name="Wedler E."/>
            <person name="Wedler H."/>
            <person name="Zimmermann F.K."/>
            <person name="Zollner A."/>
            <person name="Hani J."/>
            <person name="Hoheisel J.D."/>
        </authorList>
    </citation>
    <scope>NUCLEOTIDE SEQUENCE [LARGE SCALE GENOMIC DNA]</scope>
    <source>
        <strain>ATCC 204508 / S288c</strain>
    </source>
</reference>
<reference key="3">
    <citation type="journal article" date="2014" name="G3 (Bethesda)">
        <title>The reference genome sequence of Saccharomyces cerevisiae: Then and now.</title>
        <authorList>
            <person name="Engel S.R."/>
            <person name="Dietrich F.S."/>
            <person name="Fisk D.G."/>
            <person name="Binkley G."/>
            <person name="Balakrishnan R."/>
            <person name="Costanzo M.C."/>
            <person name="Dwight S.S."/>
            <person name="Hitz B.C."/>
            <person name="Karra K."/>
            <person name="Nash R.S."/>
            <person name="Weng S."/>
            <person name="Wong E.D."/>
            <person name="Lloyd P."/>
            <person name="Skrzypek M.S."/>
            <person name="Miyasato S.R."/>
            <person name="Simison M."/>
            <person name="Cherry J.M."/>
        </authorList>
    </citation>
    <scope>GENOME REANNOTATION</scope>
    <source>
        <strain>ATCC 204508 / S288c</strain>
    </source>
</reference>
<reference key="4">
    <citation type="journal article" date="1995" name="EMBO J.">
        <title>Fps1, a yeast member of the MIP family of channel proteins, is a facilitator for glycerol uptake and efflux and is inactive under osmotic stress.</title>
        <authorList>
            <person name="Luyten K."/>
            <person name="Albertyn J."/>
            <person name="Skibbe W.F."/>
            <person name="Prior B.A."/>
            <person name="Ramos J."/>
            <person name="Thevelein J.M."/>
            <person name="Hohmann S."/>
        </authorList>
    </citation>
    <scope>CHARACTERIZATION</scope>
</reference>
<reference key="5">
    <citation type="journal article" date="2003" name="Nature">
        <title>Global analysis of protein expression in yeast.</title>
        <authorList>
            <person name="Ghaemmaghami S."/>
            <person name="Huh W.-K."/>
            <person name="Bower K."/>
            <person name="Howson R.W."/>
            <person name="Belle A."/>
            <person name="Dephoure N."/>
            <person name="O'Shea E.K."/>
            <person name="Weissman J.S."/>
        </authorList>
    </citation>
    <scope>LEVEL OF PROTEIN EXPRESSION [LARGE SCALE ANALYSIS]</scope>
</reference>
<reference key="6">
    <citation type="journal article" date="2006" name="Proc. Natl. Acad. Sci. U.S.A.">
        <title>A global topology map of the Saccharomyces cerevisiae membrane proteome.</title>
        <authorList>
            <person name="Kim H."/>
            <person name="Melen K."/>
            <person name="Oesterberg M."/>
            <person name="von Heijne G."/>
        </authorList>
    </citation>
    <scope>TOPOLOGY [LARGE SCALE ANALYSIS]</scope>
    <source>
        <strain>ATCC 208353 / W303-1A</strain>
    </source>
</reference>
<reference key="7">
    <citation type="journal article" date="2007" name="J. Proteome Res.">
        <title>Large-scale phosphorylation analysis of alpha-factor-arrested Saccharomyces cerevisiae.</title>
        <authorList>
            <person name="Li X."/>
            <person name="Gerber S.A."/>
            <person name="Rudner A.D."/>
            <person name="Beausoleil S.A."/>
            <person name="Haas W."/>
            <person name="Villen J."/>
            <person name="Elias J.E."/>
            <person name="Gygi S.P."/>
        </authorList>
    </citation>
    <scope>PHOSPHORYLATION [LARGE SCALE ANALYSIS] AT SER-150; THR-168 AND SER-212</scope>
    <scope>IDENTIFICATION BY MASS SPECTROMETRY [LARGE SCALE ANALYSIS]</scope>
    <source>
        <strain>ADR376</strain>
    </source>
</reference>
<reference key="8">
    <citation type="journal article" date="2008" name="Mol. Cell. Proteomics">
        <title>A multidimensional chromatography technology for in-depth phosphoproteome analysis.</title>
        <authorList>
            <person name="Albuquerque C.P."/>
            <person name="Smolka M.B."/>
            <person name="Payne S.H."/>
            <person name="Bafna V."/>
            <person name="Eng J."/>
            <person name="Zhou H."/>
        </authorList>
    </citation>
    <scope>IDENTIFICATION BY MASS SPECTROMETRY [LARGE SCALE ANALYSIS]</scope>
</reference>
<reference key="9">
    <citation type="journal article" date="2009" name="Science">
        <title>Global analysis of Cdk1 substrate phosphorylation sites provides insights into evolution.</title>
        <authorList>
            <person name="Holt L.J."/>
            <person name="Tuch B.B."/>
            <person name="Villen J."/>
            <person name="Johnson A.D."/>
            <person name="Gygi S.P."/>
            <person name="Morgan D.O."/>
        </authorList>
    </citation>
    <scope>PHOSPHORYLATION [LARGE SCALE ANALYSIS] AT SER-209 AND SER-212</scope>
    <scope>IDENTIFICATION BY MASS SPECTROMETRY [LARGE SCALE ANALYSIS]</scope>
</reference>
<dbReference type="EMBL" id="X54157">
    <property type="protein sequence ID" value="CAA38096.1"/>
    <property type="molecule type" value="Genomic_DNA"/>
</dbReference>
<dbReference type="EMBL" id="Z73148">
    <property type="protein sequence ID" value="CAA97494.1"/>
    <property type="molecule type" value="Genomic_DNA"/>
</dbReference>
<dbReference type="EMBL" id="BK006945">
    <property type="protein sequence ID" value="DAA09279.1"/>
    <property type="molecule type" value="Genomic_DNA"/>
</dbReference>
<dbReference type="PIR" id="S64795">
    <property type="entry name" value="S64795"/>
</dbReference>
<dbReference type="RefSeq" id="NP_013057.1">
    <property type="nucleotide sequence ID" value="NM_001181863.1"/>
</dbReference>
<dbReference type="SMR" id="P23900"/>
<dbReference type="BioGRID" id="31270">
    <property type="interactions" value="380"/>
</dbReference>
<dbReference type="DIP" id="DIP-3979N"/>
<dbReference type="FunCoup" id="P23900">
    <property type="interactions" value="56"/>
</dbReference>
<dbReference type="IntAct" id="P23900">
    <property type="interactions" value="10"/>
</dbReference>
<dbReference type="MINT" id="P23900"/>
<dbReference type="STRING" id="4932.YLL043W"/>
<dbReference type="TCDB" id="1.A.8.5.1">
    <property type="family name" value="the major intrinsic protein (mip) family"/>
</dbReference>
<dbReference type="GlyGen" id="P23900">
    <property type="glycosylation" value="1 site"/>
</dbReference>
<dbReference type="iPTMnet" id="P23900"/>
<dbReference type="PaxDb" id="4932-YLL043W"/>
<dbReference type="PeptideAtlas" id="P23900"/>
<dbReference type="EnsemblFungi" id="YLL043W_mRNA">
    <property type="protein sequence ID" value="YLL043W"/>
    <property type="gene ID" value="YLL043W"/>
</dbReference>
<dbReference type="GeneID" id="850683"/>
<dbReference type="KEGG" id="sce:YLL043W"/>
<dbReference type="AGR" id="SGD:S000003966"/>
<dbReference type="SGD" id="S000003966">
    <property type="gene designation" value="FPS1"/>
</dbReference>
<dbReference type="VEuPathDB" id="FungiDB:YLL043W"/>
<dbReference type="eggNOG" id="KOG0224">
    <property type="taxonomic scope" value="Eukaryota"/>
</dbReference>
<dbReference type="GeneTree" id="ENSGT00940000176604"/>
<dbReference type="HOGENOM" id="CLU_027014_0_0_1"/>
<dbReference type="InParanoid" id="P23900"/>
<dbReference type="OMA" id="MGTMVMI"/>
<dbReference type="OrthoDB" id="3222at2759"/>
<dbReference type="BioCyc" id="MetaCyc:G3O-32144-MONOMER"/>
<dbReference type="BioCyc" id="YEAST:G3O-32144-MONOMER"/>
<dbReference type="Reactome" id="R-SCE-432030">
    <property type="pathway name" value="Transport of glycerol from adipocytes to the liver by Aquaporins"/>
</dbReference>
<dbReference type="Reactome" id="R-SCE-432040">
    <property type="pathway name" value="Vasopressin regulates renal water homeostasis via Aquaporins"/>
</dbReference>
<dbReference type="Reactome" id="R-SCE-432047">
    <property type="pathway name" value="Passive transport by Aquaporins"/>
</dbReference>
<dbReference type="BioGRID-ORCS" id="850683">
    <property type="hits" value="8 hits in 10 CRISPR screens"/>
</dbReference>
<dbReference type="PRO" id="PR:P23900"/>
<dbReference type="Proteomes" id="UP000002311">
    <property type="component" value="Chromosome XII"/>
</dbReference>
<dbReference type="RNAct" id="P23900">
    <property type="molecule type" value="protein"/>
</dbReference>
<dbReference type="GO" id="GO:0071944">
    <property type="term" value="C:cell periphery"/>
    <property type="evidence" value="ECO:0007005"/>
    <property type="project" value="SGD"/>
</dbReference>
<dbReference type="GO" id="GO:0005737">
    <property type="term" value="C:cytoplasm"/>
    <property type="evidence" value="ECO:0007005"/>
    <property type="project" value="SGD"/>
</dbReference>
<dbReference type="GO" id="GO:0000324">
    <property type="term" value="C:fungal-type vacuole"/>
    <property type="evidence" value="ECO:0007005"/>
    <property type="project" value="SGD"/>
</dbReference>
<dbReference type="GO" id="GO:0005886">
    <property type="term" value="C:plasma membrane"/>
    <property type="evidence" value="ECO:0000314"/>
    <property type="project" value="SGD"/>
</dbReference>
<dbReference type="GO" id="GO:0015254">
    <property type="term" value="F:glycerol channel activity"/>
    <property type="evidence" value="ECO:0000315"/>
    <property type="project" value="SGD"/>
</dbReference>
<dbReference type="GO" id="GO:0015168">
    <property type="term" value="F:glycerol transmembrane transporter activity"/>
    <property type="evidence" value="ECO:0000314"/>
    <property type="project" value="SGD"/>
</dbReference>
<dbReference type="GO" id="GO:0015250">
    <property type="term" value="F:water channel activity"/>
    <property type="evidence" value="ECO:0000318"/>
    <property type="project" value="GO_Central"/>
</dbReference>
<dbReference type="GO" id="GO:0006846">
    <property type="term" value="P:acetate transport"/>
    <property type="evidence" value="ECO:0000315"/>
    <property type="project" value="SGD"/>
</dbReference>
<dbReference type="GO" id="GO:0015700">
    <property type="term" value="P:arsenite transport"/>
    <property type="evidence" value="ECO:0000315"/>
    <property type="project" value="SGD"/>
</dbReference>
<dbReference type="GO" id="GO:0000747">
    <property type="term" value="P:conjugation with cellular fusion"/>
    <property type="evidence" value="ECO:0000315"/>
    <property type="project" value="SGD"/>
</dbReference>
<dbReference type="GO" id="GO:0006071">
    <property type="term" value="P:glycerol metabolic process"/>
    <property type="evidence" value="ECO:0007669"/>
    <property type="project" value="UniProtKB-KW"/>
</dbReference>
<dbReference type="GO" id="GO:0015793">
    <property type="term" value="P:glycerol transmembrane transport"/>
    <property type="evidence" value="ECO:0000314"/>
    <property type="project" value="SGD"/>
</dbReference>
<dbReference type="GO" id="GO:0015791">
    <property type="term" value="P:polyol transmembrane transport"/>
    <property type="evidence" value="ECO:0000315"/>
    <property type="project" value="SGD"/>
</dbReference>
<dbReference type="GO" id="GO:0006833">
    <property type="term" value="P:water transport"/>
    <property type="evidence" value="ECO:0000318"/>
    <property type="project" value="GO_Central"/>
</dbReference>
<dbReference type="CDD" id="cd00333">
    <property type="entry name" value="MIP"/>
    <property type="match status" value="1"/>
</dbReference>
<dbReference type="Gene3D" id="1.20.1080.10">
    <property type="entry name" value="Glycerol uptake facilitator protein"/>
    <property type="match status" value="1"/>
</dbReference>
<dbReference type="InterPro" id="IPR023271">
    <property type="entry name" value="Aquaporin-like"/>
</dbReference>
<dbReference type="InterPro" id="IPR000425">
    <property type="entry name" value="MIP"/>
</dbReference>
<dbReference type="InterPro" id="IPR050363">
    <property type="entry name" value="MIP/Aquaporin"/>
</dbReference>
<dbReference type="InterPro" id="IPR022357">
    <property type="entry name" value="MIP_CS"/>
</dbReference>
<dbReference type="NCBIfam" id="TIGR00861">
    <property type="entry name" value="MIP"/>
    <property type="match status" value="1"/>
</dbReference>
<dbReference type="PANTHER" id="PTHR43829">
    <property type="entry name" value="AQUAPORIN OR AQUAGLYCEROPORIN RELATED"/>
    <property type="match status" value="1"/>
</dbReference>
<dbReference type="PANTHER" id="PTHR43829:SF9">
    <property type="entry name" value="AQUAPORIN-9"/>
    <property type="match status" value="1"/>
</dbReference>
<dbReference type="Pfam" id="PF00230">
    <property type="entry name" value="MIP"/>
    <property type="match status" value="1"/>
</dbReference>
<dbReference type="PRINTS" id="PR00783">
    <property type="entry name" value="MINTRINSICP"/>
</dbReference>
<dbReference type="SUPFAM" id="SSF81338">
    <property type="entry name" value="Aquaporin-like"/>
    <property type="match status" value="1"/>
</dbReference>
<dbReference type="PROSITE" id="PS00221">
    <property type="entry name" value="MIP"/>
    <property type="match status" value="1"/>
</dbReference>
<sequence>MSNPQKALNDFLSSESVHTHDSSRKQSNKQSSDEGRSSSQPSHHHSGGTNNNNNNNNNNNNSNNNNNGNDGGNDDDYDYEMQDYRPSPQSARPTPTYVPQYSVESGTAFPIQEVIPSAYINTQDINHKDNGPPSASSNRAFRPRGQTTVSANVLNIEDFYKNADDAHTIPESHLSRRRSRSRATSNAGHSANTGATNGRTTGAQTNMESNESPRNVPIMVKPKTLYQNPQTPTVLPSTYHPINKWSSVKNTYLKEFLAEFMGTMVMIIFGSAVVCQVNVAGKIQQDNFNVALDNLNVTGSSAETIDAMKSLTSLVSSVAGGTFDDVALGWAAAVVMGYFCAGGSAISGAHLNPSITLANLVYRGFPLKKVPYYFAGQLIGAFTGALILFIWYKRVLQEAYSDWWMNESVAGMFCVFPKPYLSSGRQFFSEFLCGAMLQAGTFALTDPYTCLSSDVFPLMMFILIFIINASMAYQTGTAMNLARDLGPRLALYAVGFDHKMLWVHHHHFFWVPMVGPFIGALMGGLVYDVCIYQGHESPVNWSLPVYKEMIMRAWFRRPGWKKRNRARRTSDLSDFSYNNDDDEEFGERMALQKTKTKSSISDNENEAGEKKVQFKSVQRGKRTFGGIPTILEEEDSIETASLGATTTDSIGLSDTSSEDSHYGNAKKVT</sequence>
<feature type="chain" id="PRO_0000064098" description="Glycerol uptake/efflux facilitator protein">
    <location>
        <begin position="1"/>
        <end position="669"/>
    </location>
</feature>
<feature type="topological domain" description="Extracellular" evidence="1">
    <location>
        <begin position="1"/>
        <end position="254"/>
    </location>
</feature>
<feature type="transmembrane region" description="Helical" evidence="1">
    <location>
        <begin position="255"/>
        <end position="275"/>
    </location>
</feature>
<feature type="topological domain" description="Cytoplasmic" evidence="1">
    <location>
        <begin position="276"/>
        <end position="325"/>
    </location>
</feature>
<feature type="transmembrane region" description="Helical" evidence="1">
    <location>
        <begin position="326"/>
        <end position="346"/>
    </location>
</feature>
<feature type="topological domain" description="Extracellular" evidence="1">
    <location>
        <begin position="347"/>
        <end position="369"/>
    </location>
</feature>
<feature type="transmembrane region" description="Helical" evidence="1">
    <location>
        <begin position="370"/>
        <end position="390"/>
    </location>
</feature>
<feature type="topological domain" description="Cytoplasmic" evidence="1">
    <location>
        <begin position="391"/>
        <end position="446"/>
    </location>
</feature>
<feature type="transmembrane region" description="Helical" evidence="1">
    <location>
        <begin position="447"/>
        <end position="467"/>
    </location>
</feature>
<feature type="topological domain" description="Extracellular" evidence="1">
    <location>
        <begin position="468"/>
        <end position="506"/>
    </location>
</feature>
<feature type="transmembrane region" description="Helical" evidence="1">
    <location>
        <begin position="507"/>
        <end position="527"/>
    </location>
</feature>
<feature type="topological domain" description="Cytoplasmic" evidence="1">
    <location>
        <begin position="528"/>
        <end position="669"/>
    </location>
</feature>
<feature type="region of interest" description="Disordered" evidence="2">
    <location>
        <begin position="1"/>
        <end position="99"/>
    </location>
</feature>
<feature type="region of interest" description="Disordered" evidence="2">
    <location>
        <begin position="123"/>
        <end position="147"/>
    </location>
</feature>
<feature type="region of interest" description="Disordered" evidence="2">
    <location>
        <begin position="167"/>
        <end position="215"/>
    </location>
</feature>
<feature type="region of interest" description="Disordered" evidence="2">
    <location>
        <begin position="591"/>
        <end position="615"/>
    </location>
</feature>
<feature type="region of interest" description="Disordered" evidence="2">
    <location>
        <begin position="635"/>
        <end position="669"/>
    </location>
</feature>
<feature type="short sequence motif" description="NPA 1">
    <location>
        <begin position="352"/>
        <end position="354"/>
    </location>
</feature>
<feature type="short sequence motif" description="NPA 2">
    <location>
        <begin position="480"/>
        <end position="482"/>
    </location>
</feature>
<feature type="compositionally biased region" description="Polar residues" evidence="2">
    <location>
        <begin position="1"/>
        <end position="16"/>
    </location>
</feature>
<feature type="compositionally biased region" description="Low complexity" evidence="2">
    <location>
        <begin position="50"/>
        <end position="68"/>
    </location>
</feature>
<feature type="compositionally biased region" description="Acidic residues" evidence="2">
    <location>
        <begin position="72"/>
        <end position="81"/>
    </location>
</feature>
<feature type="compositionally biased region" description="Polar residues" evidence="2">
    <location>
        <begin position="87"/>
        <end position="99"/>
    </location>
</feature>
<feature type="compositionally biased region" description="Polar residues" evidence="2">
    <location>
        <begin position="133"/>
        <end position="147"/>
    </location>
</feature>
<feature type="compositionally biased region" description="Low complexity" evidence="2">
    <location>
        <begin position="191"/>
        <end position="206"/>
    </location>
</feature>
<feature type="compositionally biased region" description="Polar residues" evidence="2">
    <location>
        <begin position="638"/>
        <end position="655"/>
    </location>
</feature>
<feature type="modified residue" description="Phosphoserine" evidence="5">
    <location>
        <position position="150"/>
    </location>
</feature>
<feature type="modified residue" description="Phosphothreonine" evidence="5">
    <location>
        <position position="168"/>
    </location>
</feature>
<feature type="modified residue" description="Phosphoserine" evidence="6">
    <location>
        <position position="209"/>
    </location>
</feature>
<feature type="modified residue" description="Phosphoserine" evidence="5 6">
    <location>
        <position position="212"/>
    </location>
</feature>
<feature type="sequence conflict" description="In Ref. 1; CAA38096." evidence="4" ref="1">
    <original>A</original>
    <variation>R</variation>
    <location>
        <position position="640"/>
    </location>
</feature>
<comment type="function">
    <text>Channel protein for glycerol. Has a role in both glycerol influx and efflux. Plays a role in osmoregulation: under osmotic stress the channel is apparently closed to allow accumulation of glycerol in the cell under hyperosmotic conditions.</text>
</comment>
<comment type="subcellular location">
    <subcellularLocation>
        <location evidence="4">Membrane</location>
        <topology evidence="4">Multi-pass membrane protein</topology>
    </subcellularLocation>
</comment>
<comment type="domain">
    <text>Aquaporins contain two tandem repeats each containing three membrane-spanning domains and a pore-forming loop with the signature motif Asn-Pro/Leu-Ala/Ser (NPA).</text>
</comment>
<comment type="miscellaneous">
    <text evidence="3">Present with 907 molecules/cell in log phase SD medium.</text>
</comment>
<comment type="similarity">
    <text evidence="4">Belongs to the MIP/aquaporin (TC 1.A.8) family.</text>
</comment>
<protein>
    <recommendedName>
        <fullName>Glycerol uptake/efflux facilitator protein</fullName>
    </recommendedName>
</protein>
<accession>P23900</accession>
<accession>D6VXW3</accession>
<organism>
    <name type="scientific">Saccharomyces cerevisiae (strain ATCC 204508 / S288c)</name>
    <name type="common">Baker's yeast</name>
    <dbReference type="NCBI Taxonomy" id="559292"/>
    <lineage>
        <taxon>Eukaryota</taxon>
        <taxon>Fungi</taxon>
        <taxon>Dikarya</taxon>
        <taxon>Ascomycota</taxon>
        <taxon>Saccharomycotina</taxon>
        <taxon>Saccharomycetes</taxon>
        <taxon>Saccharomycetales</taxon>
        <taxon>Saccharomycetaceae</taxon>
        <taxon>Saccharomyces</taxon>
    </lineage>
</organism>
<keyword id="KW-0319">Glycerol metabolism</keyword>
<keyword id="KW-0472">Membrane</keyword>
<keyword id="KW-0597">Phosphoprotein</keyword>
<keyword id="KW-1185">Reference proteome</keyword>
<keyword id="KW-0677">Repeat</keyword>
<keyword id="KW-0812">Transmembrane</keyword>
<keyword id="KW-1133">Transmembrane helix</keyword>
<keyword id="KW-0813">Transport</keyword>
<gene>
    <name type="primary">FPS1</name>
    <name type="ordered locus">YLL043W</name>
</gene>
<name>FPS1_YEAST</name>